<gene>
    <name evidence="1" type="primary">accD</name>
    <name type="ordered locus">AtCg00500</name>
</gene>
<proteinExistence type="evidence at protein level"/>
<protein>
    <recommendedName>
        <fullName evidence="1">Acetyl-coenzyme A carboxylase carboxyl transferase subunit beta, chloroplastic</fullName>
        <shortName evidence="1">ACCase subunit beta</shortName>
        <shortName evidence="1">Acetyl-CoA carboxylase carboxyltransferase subunit beta</shortName>
        <ecNumber evidence="1">2.1.3.15</ecNumber>
    </recommendedName>
</protein>
<name>ACCD_ARATH</name>
<comment type="function">
    <text evidence="1">Component of the acetyl coenzyme A carboxylase (ACC) complex. Biotin carboxylase (BC) catalyzes the carboxylation of biotin on its carrier protein (BCCP) and then the CO(2) group is transferred by the transcarboxylase to acetyl-CoA to form malonyl-CoA.</text>
</comment>
<comment type="catalytic activity">
    <reaction evidence="1">
        <text>N(6)-carboxybiotinyl-L-lysyl-[protein] + acetyl-CoA = N(6)-biotinyl-L-lysyl-[protein] + malonyl-CoA</text>
        <dbReference type="Rhea" id="RHEA:54728"/>
        <dbReference type="Rhea" id="RHEA-COMP:10505"/>
        <dbReference type="Rhea" id="RHEA-COMP:10506"/>
        <dbReference type="ChEBI" id="CHEBI:57288"/>
        <dbReference type="ChEBI" id="CHEBI:57384"/>
        <dbReference type="ChEBI" id="CHEBI:83144"/>
        <dbReference type="ChEBI" id="CHEBI:83145"/>
        <dbReference type="EC" id="2.1.3.15"/>
    </reaction>
</comment>
<comment type="cofactor">
    <cofactor evidence="1">
        <name>Zn(2+)</name>
        <dbReference type="ChEBI" id="CHEBI:29105"/>
    </cofactor>
    <text evidence="1">Binds 1 zinc ion per subunit.</text>
</comment>
<comment type="pathway">
    <text evidence="1">Lipid metabolism; malonyl-CoA biosynthesis; malonyl-CoA from acetyl-CoA: step 1/1.</text>
</comment>
<comment type="subunit">
    <text evidence="3">Acetyl-CoA carboxylase is a heterohexamer composed of biotin carboxyl carrier protein, biotin carboxylase and 2 subunits each of ACCase subunit alpha and ACCase plastid-coded subunit beta (accD).</text>
</comment>
<comment type="subcellular location">
    <subcellularLocation>
        <location evidence="5">Plastid</location>
        <location evidence="5">Chloroplast membrane</location>
        <topology>Peripheral membrane protein</topology>
    </subcellularLocation>
    <subcellularLocation>
        <location evidence="5">Plastid</location>
        <location evidence="5">Chloroplast stroma</location>
    </subcellularLocation>
</comment>
<comment type="tissue specificity">
    <text evidence="3">Accumulates in fatty acids synthesizing tissues such as embryos, expanding leaves, flower buds, flowers, and developing siliques.</text>
</comment>
<comment type="RNA editing">
    <location>
        <position position="265" evidence="4"/>
    </location>
</comment>
<comment type="similarity">
    <text evidence="1">Belongs to the AccD/PCCB family.</text>
</comment>
<feature type="chain" id="PRO_0000199780" description="Acetyl-coenzyme A carboxylase carboxyl transferase subunit beta, chloroplastic">
    <location>
        <begin position="1"/>
        <end position="488"/>
    </location>
</feature>
<feature type="domain" description="CoA carboxyltransferase N-terminal" evidence="2">
    <location>
        <begin position="227"/>
        <end position="488"/>
    </location>
</feature>
<feature type="zinc finger region" description="C4-type" evidence="1">
    <location>
        <begin position="231"/>
        <end position="250"/>
    </location>
</feature>
<feature type="binding site" evidence="1">
    <location>
        <position position="231"/>
    </location>
    <ligand>
        <name>Zn(2+)</name>
        <dbReference type="ChEBI" id="CHEBI:29105"/>
    </ligand>
</feature>
<feature type="binding site" evidence="1">
    <location>
        <position position="234"/>
    </location>
    <ligand>
        <name>Zn(2+)</name>
        <dbReference type="ChEBI" id="CHEBI:29105"/>
    </ligand>
</feature>
<feature type="binding site" evidence="1">
    <location>
        <position position="247"/>
    </location>
    <ligand>
        <name>Zn(2+)</name>
        <dbReference type="ChEBI" id="CHEBI:29105"/>
    </ligand>
</feature>
<feature type="binding site" evidence="1">
    <location>
        <position position="250"/>
    </location>
    <ligand>
        <name>Zn(2+)</name>
        <dbReference type="ChEBI" id="CHEBI:29105"/>
    </ligand>
</feature>
<accession>P56765</accession>
<sequence>MEKSWFNFMFSKGELEYRGELSKAMDSFAPGEKTTISQDRFIYDMDKNFYGWDERSSYSSSYSNNVDLLVSSKDIRNFISDDTFFVRDSNKNSYSIFFDKKKKIFEIDNDFSDLEKFFYSYCSSSYLNNRSKGDNDLHYDPYIKDTKYNCTNHINSCIDSYFRSYICIDNNFLIDSNNFNESYIYNFICSESGKIRESKNYKIRTNRNRSNLISSKDFDITQNYNQLWIQCDNCYGLMYKKVKMNVCEQCGHYLKMSSSERIELLIDPGTWNPMDEDMVSADPIKFHSKEEPYKNRIDSAQKTTGLTDAVQTGTGQLNGIPVALGVMDFRFMGGSMGSVVGEKITRLIEYATNQCLPLILVCSSGGARMQEGSLSLMQMAKISSVLCDYQSSKKLFYISILTSPTTGGVTASFGMLGDIIIAEPYAYIAFAGKRVIEQTLKKAVPEGSQAAESLLRKGLLDAIVPRNLLKGVLSELFQLHAFFPLNTN</sequence>
<reference key="1">
    <citation type="journal article" date="2000" name="Plant Physiol.">
        <title>Coordinate regulation of the nuclear and plastidic genes coding for the subunits of the heteromeric acetyl-coenzyme A carboxylase.</title>
        <authorList>
            <person name="Ke J."/>
            <person name="Wen T.N."/>
            <person name="Nikolau B.J."/>
            <person name="Wurtele E.S."/>
        </authorList>
    </citation>
    <scope>NUCLEOTIDE SEQUENCE [GENOMIC DNA]</scope>
    <scope>TISSUE SPECIFICITY</scope>
    <scope>SUBUNIT</scope>
    <source>
        <strain>cv. Columbia</strain>
    </source>
</reference>
<reference key="2">
    <citation type="journal article" date="1999" name="DNA Res.">
        <title>Complete structure of the chloroplast genome of Arabidopsis thaliana.</title>
        <authorList>
            <person name="Sato S."/>
            <person name="Nakamura Y."/>
            <person name="Kaneko T."/>
            <person name="Asamizu E."/>
            <person name="Tabata S."/>
        </authorList>
    </citation>
    <scope>NUCLEOTIDE SEQUENCE [LARGE SCALE GENOMIC DNA]</scope>
    <source>
        <strain>cv. Columbia</strain>
    </source>
</reference>
<reference key="3">
    <citation type="journal article" date="2001" name="J. Biol. Chem.">
        <title>Chloroplast RNA editing required for functional acetyl-CoA carboxylase in plants.</title>
        <authorList>
            <person name="Sasaki Y."/>
            <person name="Kozaki A."/>
            <person name="Ohmori A."/>
            <person name="Iguchi H."/>
            <person name="Nagano Y."/>
        </authorList>
    </citation>
    <scope>RNA EDITING</scope>
    <source>
        <strain>cv. Columbia</strain>
    </source>
</reference>
<reference key="4">
    <citation type="journal article" date="2008" name="PLoS ONE">
        <title>Sorting signals, N-terminal modifications and abundance of the chloroplast proteome.</title>
        <authorList>
            <person name="Zybailov B."/>
            <person name="Rutschow H."/>
            <person name="Friso G."/>
            <person name="Rudella A."/>
            <person name="Emanuelsson O."/>
            <person name="Sun Q."/>
            <person name="van Wijk K.J."/>
        </authorList>
    </citation>
    <scope>IDENTIFICATION BY MASS SPECTROMETRY</scope>
    <scope>SUBCELLULAR LOCATION [LARGE SCALE ANALYSIS]</scope>
</reference>
<organism>
    <name type="scientific">Arabidopsis thaliana</name>
    <name type="common">Mouse-ear cress</name>
    <dbReference type="NCBI Taxonomy" id="3702"/>
    <lineage>
        <taxon>Eukaryota</taxon>
        <taxon>Viridiplantae</taxon>
        <taxon>Streptophyta</taxon>
        <taxon>Embryophyta</taxon>
        <taxon>Tracheophyta</taxon>
        <taxon>Spermatophyta</taxon>
        <taxon>Magnoliopsida</taxon>
        <taxon>eudicotyledons</taxon>
        <taxon>Gunneridae</taxon>
        <taxon>Pentapetalae</taxon>
        <taxon>rosids</taxon>
        <taxon>malvids</taxon>
        <taxon>Brassicales</taxon>
        <taxon>Brassicaceae</taxon>
        <taxon>Camelineae</taxon>
        <taxon>Arabidopsis</taxon>
    </lineage>
</organism>
<geneLocation type="chloroplast"/>
<dbReference type="EC" id="2.1.3.15" evidence="1"/>
<dbReference type="EMBL" id="AF056971">
    <property type="protein sequence ID" value="AAF35256.1"/>
    <property type="status" value="ALT_SEQ"/>
    <property type="molecule type" value="Genomic_DNA"/>
</dbReference>
<dbReference type="EMBL" id="AP000423">
    <property type="protein sequence ID" value="BAA84394.1"/>
    <property type="status" value="ALT_SEQ"/>
    <property type="molecule type" value="Genomic_DNA"/>
</dbReference>
<dbReference type="RefSeq" id="NP_051068.1">
    <property type="nucleotide sequence ID" value="NC_000932.1"/>
</dbReference>
<dbReference type="SMR" id="P56765"/>
<dbReference type="BioGRID" id="29959">
    <property type="interactions" value="3"/>
</dbReference>
<dbReference type="FunCoup" id="P56765">
    <property type="interactions" value="366"/>
</dbReference>
<dbReference type="IntAct" id="P56765">
    <property type="interactions" value="1"/>
</dbReference>
<dbReference type="STRING" id="3702.P56765"/>
<dbReference type="PaxDb" id="3702-ATCG00500.1"/>
<dbReference type="ProteomicsDB" id="244500"/>
<dbReference type="GeneID" id="844755"/>
<dbReference type="KEGG" id="ath:ArthCp031"/>
<dbReference type="Araport" id="ATCG00500"/>
<dbReference type="TAIR" id="ATCG00500">
    <property type="gene designation" value="ACCD"/>
</dbReference>
<dbReference type="eggNOG" id="KOG0540">
    <property type="taxonomic scope" value="Eukaryota"/>
</dbReference>
<dbReference type="HOGENOM" id="CLU_537942_0_0_1"/>
<dbReference type="InParanoid" id="P56765"/>
<dbReference type="BioCyc" id="ARA:ATCG00500-MONOMER"/>
<dbReference type="BioCyc" id="MetaCyc:ATCG00500-MONOMER"/>
<dbReference type="BRENDA" id="2.1.3.15">
    <property type="organism ID" value="399"/>
</dbReference>
<dbReference type="UniPathway" id="UPA00655">
    <property type="reaction ID" value="UER00711"/>
</dbReference>
<dbReference type="CD-CODE" id="4299E36E">
    <property type="entry name" value="Nucleolus"/>
</dbReference>
<dbReference type="PRO" id="PR:P56765"/>
<dbReference type="Proteomes" id="UP000006548">
    <property type="component" value="Chloroplast Pltd"/>
</dbReference>
<dbReference type="ExpressionAtlas" id="P56765">
    <property type="expression patterns" value="baseline and differential"/>
</dbReference>
<dbReference type="GO" id="GO:0009317">
    <property type="term" value="C:acetyl-CoA carboxylase complex"/>
    <property type="evidence" value="ECO:0007669"/>
    <property type="project" value="InterPro"/>
</dbReference>
<dbReference type="GO" id="GO:0031969">
    <property type="term" value="C:chloroplast membrane"/>
    <property type="evidence" value="ECO:0007669"/>
    <property type="project" value="UniProtKB-SubCell"/>
</dbReference>
<dbReference type="GO" id="GO:0009570">
    <property type="term" value="C:chloroplast stroma"/>
    <property type="evidence" value="ECO:0007669"/>
    <property type="project" value="UniProtKB-SubCell"/>
</dbReference>
<dbReference type="GO" id="GO:0003989">
    <property type="term" value="F:acetyl-CoA carboxylase activity"/>
    <property type="evidence" value="ECO:0007669"/>
    <property type="project" value="InterPro"/>
</dbReference>
<dbReference type="GO" id="GO:0005524">
    <property type="term" value="F:ATP binding"/>
    <property type="evidence" value="ECO:0007669"/>
    <property type="project" value="UniProtKB-KW"/>
</dbReference>
<dbReference type="GO" id="GO:0016743">
    <property type="term" value="F:carboxyl- or carbamoyltransferase activity"/>
    <property type="evidence" value="ECO:0007669"/>
    <property type="project" value="UniProtKB-UniRule"/>
</dbReference>
<dbReference type="GO" id="GO:0008270">
    <property type="term" value="F:zinc ion binding"/>
    <property type="evidence" value="ECO:0007669"/>
    <property type="project" value="UniProtKB-UniRule"/>
</dbReference>
<dbReference type="GO" id="GO:0006633">
    <property type="term" value="P:fatty acid biosynthetic process"/>
    <property type="evidence" value="ECO:0000318"/>
    <property type="project" value="GO_Central"/>
</dbReference>
<dbReference type="GO" id="GO:2001295">
    <property type="term" value="P:malonyl-CoA biosynthetic process"/>
    <property type="evidence" value="ECO:0007669"/>
    <property type="project" value="UniProtKB-UniRule"/>
</dbReference>
<dbReference type="Gene3D" id="3.90.226.10">
    <property type="entry name" value="2-enoyl-CoA Hydratase, Chain A, domain 1"/>
    <property type="match status" value="1"/>
</dbReference>
<dbReference type="HAMAP" id="MF_01395">
    <property type="entry name" value="AcetylCoA_CT_beta"/>
    <property type="match status" value="1"/>
</dbReference>
<dbReference type="InterPro" id="IPR034733">
    <property type="entry name" value="AcCoA_carboxyl_beta"/>
</dbReference>
<dbReference type="InterPro" id="IPR000438">
    <property type="entry name" value="Acetyl_CoA_COase_Trfase_b_su"/>
</dbReference>
<dbReference type="InterPro" id="IPR029045">
    <property type="entry name" value="ClpP/crotonase-like_dom_sf"/>
</dbReference>
<dbReference type="InterPro" id="IPR011762">
    <property type="entry name" value="COA_CT_N"/>
</dbReference>
<dbReference type="NCBIfam" id="TIGR00515">
    <property type="entry name" value="accD"/>
    <property type="match status" value="1"/>
</dbReference>
<dbReference type="PANTHER" id="PTHR42995">
    <property type="entry name" value="ACETYL-COENZYME A CARBOXYLASE CARBOXYL TRANSFERASE SUBUNIT BETA, CHLOROPLASTIC"/>
    <property type="match status" value="1"/>
</dbReference>
<dbReference type="PANTHER" id="PTHR42995:SF5">
    <property type="entry name" value="ACETYL-COENZYME A CARBOXYLASE CARBOXYL TRANSFERASE SUBUNIT BETA, CHLOROPLASTIC"/>
    <property type="match status" value="1"/>
</dbReference>
<dbReference type="Pfam" id="PF01039">
    <property type="entry name" value="Carboxyl_trans"/>
    <property type="match status" value="1"/>
</dbReference>
<dbReference type="PRINTS" id="PR01070">
    <property type="entry name" value="ACCCTRFRASEB"/>
</dbReference>
<dbReference type="SUPFAM" id="SSF52096">
    <property type="entry name" value="ClpP/crotonase"/>
    <property type="match status" value="1"/>
</dbReference>
<dbReference type="PROSITE" id="PS50980">
    <property type="entry name" value="COA_CT_NTER"/>
    <property type="match status" value="1"/>
</dbReference>
<keyword id="KW-0067">ATP-binding</keyword>
<keyword id="KW-0150">Chloroplast</keyword>
<keyword id="KW-0275">Fatty acid biosynthesis</keyword>
<keyword id="KW-0276">Fatty acid metabolism</keyword>
<keyword id="KW-0444">Lipid biosynthesis</keyword>
<keyword id="KW-0443">Lipid metabolism</keyword>
<keyword id="KW-0472">Membrane</keyword>
<keyword id="KW-0479">Metal-binding</keyword>
<keyword id="KW-0547">Nucleotide-binding</keyword>
<keyword id="KW-0934">Plastid</keyword>
<keyword id="KW-1185">Reference proteome</keyword>
<keyword id="KW-0691">RNA editing</keyword>
<keyword id="KW-0808">Transferase</keyword>
<keyword id="KW-0862">Zinc</keyword>
<keyword id="KW-0863">Zinc-finger</keyword>
<evidence type="ECO:0000255" key="1">
    <source>
        <dbReference type="HAMAP-Rule" id="MF_01395"/>
    </source>
</evidence>
<evidence type="ECO:0000255" key="2">
    <source>
        <dbReference type="PROSITE-ProRule" id="PRU01136"/>
    </source>
</evidence>
<evidence type="ECO:0000269" key="3">
    <source>
    </source>
</evidence>
<evidence type="ECO:0000269" key="4">
    <source>
    </source>
</evidence>
<evidence type="ECO:0000269" key="5">
    <source>
    </source>
</evidence>